<comment type="function">
    <text evidence="1">Produces ATP from ADP in the presence of a proton gradient across the membrane. The gamma chain is believed to be important in regulating ATPase activity and the flow of protons through the CF(0) complex.</text>
</comment>
<comment type="subunit">
    <text evidence="1">F-type ATPases have 2 components, CF(1) - the catalytic core - and CF(0) - the membrane proton channel. CF(1) has five subunits: alpha(3), beta(3), gamma(1), delta(1), epsilon(1). CF(0) has three main subunits: a, b and c.</text>
</comment>
<comment type="subcellular location">
    <subcellularLocation>
        <location evidence="1">Cell inner membrane</location>
        <topology evidence="1">Peripheral membrane protein</topology>
    </subcellularLocation>
</comment>
<comment type="similarity">
    <text evidence="1">Belongs to the ATPase gamma chain family.</text>
</comment>
<proteinExistence type="inferred from homology"/>
<protein>
    <recommendedName>
        <fullName evidence="1">ATP synthase gamma chain</fullName>
    </recommendedName>
    <alternativeName>
        <fullName evidence="1">ATP synthase F1 sector gamma subunit</fullName>
    </alternativeName>
    <alternativeName>
        <fullName evidence="1">F-ATPase gamma subunit</fullName>
    </alternativeName>
</protein>
<dbReference type="EMBL" id="AM260479">
    <property type="protein sequence ID" value="CAJ94695.1"/>
    <property type="molecule type" value="Genomic_DNA"/>
</dbReference>
<dbReference type="RefSeq" id="WP_010811264.1">
    <property type="nucleotide sequence ID" value="NZ_CP039287.1"/>
</dbReference>
<dbReference type="SMR" id="Q0K5M6"/>
<dbReference type="STRING" id="381666.H16_A3638"/>
<dbReference type="KEGG" id="reh:H16_A3638"/>
<dbReference type="eggNOG" id="COG0224">
    <property type="taxonomic scope" value="Bacteria"/>
</dbReference>
<dbReference type="HOGENOM" id="CLU_050669_0_1_4"/>
<dbReference type="OrthoDB" id="9812769at2"/>
<dbReference type="Proteomes" id="UP000008210">
    <property type="component" value="Chromosome 1"/>
</dbReference>
<dbReference type="GO" id="GO:0005886">
    <property type="term" value="C:plasma membrane"/>
    <property type="evidence" value="ECO:0007669"/>
    <property type="project" value="UniProtKB-SubCell"/>
</dbReference>
<dbReference type="GO" id="GO:0045259">
    <property type="term" value="C:proton-transporting ATP synthase complex"/>
    <property type="evidence" value="ECO:0007669"/>
    <property type="project" value="UniProtKB-KW"/>
</dbReference>
<dbReference type="GO" id="GO:0005524">
    <property type="term" value="F:ATP binding"/>
    <property type="evidence" value="ECO:0007669"/>
    <property type="project" value="UniProtKB-UniRule"/>
</dbReference>
<dbReference type="GO" id="GO:0046933">
    <property type="term" value="F:proton-transporting ATP synthase activity, rotational mechanism"/>
    <property type="evidence" value="ECO:0007669"/>
    <property type="project" value="UniProtKB-UniRule"/>
</dbReference>
<dbReference type="GO" id="GO:0042777">
    <property type="term" value="P:proton motive force-driven plasma membrane ATP synthesis"/>
    <property type="evidence" value="ECO:0007669"/>
    <property type="project" value="UniProtKB-UniRule"/>
</dbReference>
<dbReference type="CDD" id="cd12151">
    <property type="entry name" value="F1-ATPase_gamma"/>
    <property type="match status" value="1"/>
</dbReference>
<dbReference type="FunFam" id="1.10.287.80:FF:000005">
    <property type="entry name" value="ATP synthase gamma chain"/>
    <property type="match status" value="1"/>
</dbReference>
<dbReference type="Gene3D" id="3.40.1380.10">
    <property type="match status" value="1"/>
</dbReference>
<dbReference type="Gene3D" id="1.10.287.80">
    <property type="entry name" value="ATP synthase, gamma subunit, helix hairpin domain"/>
    <property type="match status" value="1"/>
</dbReference>
<dbReference type="HAMAP" id="MF_00815">
    <property type="entry name" value="ATP_synth_gamma_bact"/>
    <property type="match status" value="1"/>
</dbReference>
<dbReference type="InterPro" id="IPR035968">
    <property type="entry name" value="ATP_synth_F1_ATPase_gsu"/>
</dbReference>
<dbReference type="InterPro" id="IPR000131">
    <property type="entry name" value="ATP_synth_F1_gsu"/>
</dbReference>
<dbReference type="InterPro" id="IPR023632">
    <property type="entry name" value="ATP_synth_F1_gsu_CS"/>
</dbReference>
<dbReference type="NCBIfam" id="TIGR01146">
    <property type="entry name" value="ATPsyn_F1gamma"/>
    <property type="match status" value="1"/>
</dbReference>
<dbReference type="NCBIfam" id="NF004144">
    <property type="entry name" value="PRK05621.1-1"/>
    <property type="match status" value="1"/>
</dbReference>
<dbReference type="PANTHER" id="PTHR11693">
    <property type="entry name" value="ATP SYNTHASE GAMMA CHAIN"/>
    <property type="match status" value="1"/>
</dbReference>
<dbReference type="PANTHER" id="PTHR11693:SF22">
    <property type="entry name" value="ATP SYNTHASE SUBUNIT GAMMA, MITOCHONDRIAL"/>
    <property type="match status" value="1"/>
</dbReference>
<dbReference type="Pfam" id="PF00231">
    <property type="entry name" value="ATP-synt"/>
    <property type="match status" value="1"/>
</dbReference>
<dbReference type="PRINTS" id="PR00126">
    <property type="entry name" value="ATPASEGAMMA"/>
</dbReference>
<dbReference type="SUPFAM" id="SSF52943">
    <property type="entry name" value="ATP synthase (F1-ATPase), gamma subunit"/>
    <property type="match status" value="1"/>
</dbReference>
<dbReference type="PROSITE" id="PS00153">
    <property type="entry name" value="ATPASE_GAMMA"/>
    <property type="match status" value="1"/>
</dbReference>
<sequence length="291" mass="32166">MAGTKEIRTKIKSVQNTRKITKAMEMVAASKMRKAQERMRSARPYAEKVRNIAAHLATANPEFKHPFMQEREVKRVGMIVVTTDKGLCGGLNTNVLRAVTNELKTLQGRGVDVQATAIGTKGMQFLGRVGAKVISHVVHLGDTPHLEKLIGAIKVQLDAFTNGEVDAVYLAYTKFINTMKQEPMVEQLLPLAADKLVQTEEEKRAYSWDYIYEPDAQTVVEELLVRYVEALVYQAVAENMASEQSARMVAMKAASDNAKNVIGELQLVYNKTRQAAITKELSEIVSGAAAV</sequence>
<reference key="1">
    <citation type="journal article" date="2006" name="Nat. Biotechnol.">
        <title>Genome sequence of the bioplastic-producing 'Knallgas' bacterium Ralstonia eutropha H16.</title>
        <authorList>
            <person name="Pohlmann A."/>
            <person name="Fricke W.F."/>
            <person name="Reinecke F."/>
            <person name="Kusian B."/>
            <person name="Liesegang H."/>
            <person name="Cramm R."/>
            <person name="Eitinger T."/>
            <person name="Ewering C."/>
            <person name="Poetter M."/>
            <person name="Schwartz E."/>
            <person name="Strittmatter A."/>
            <person name="Voss I."/>
            <person name="Gottschalk G."/>
            <person name="Steinbuechel A."/>
            <person name="Friedrich B."/>
            <person name="Bowien B."/>
        </authorList>
    </citation>
    <scope>NUCLEOTIDE SEQUENCE [LARGE SCALE GENOMIC DNA]</scope>
    <source>
        <strain>ATCC 17699 / DSM 428 / KCTC 22496 / NCIMB 10442 / H16 / Stanier 337</strain>
    </source>
</reference>
<evidence type="ECO:0000255" key="1">
    <source>
        <dbReference type="HAMAP-Rule" id="MF_00815"/>
    </source>
</evidence>
<feature type="chain" id="PRO_1000053300" description="ATP synthase gamma chain">
    <location>
        <begin position="1"/>
        <end position="291"/>
    </location>
</feature>
<organism>
    <name type="scientific">Cupriavidus necator (strain ATCC 17699 / DSM 428 / KCTC 22496 / NCIMB 10442 / H16 / Stanier 337)</name>
    <name type="common">Ralstonia eutropha</name>
    <dbReference type="NCBI Taxonomy" id="381666"/>
    <lineage>
        <taxon>Bacteria</taxon>
        <taxon>Pseudomonadati</taxon>
        <taxon>Pseudomonadota</taxon>
        <taxon>Betaproteobacteria</taxon>
        <taxon>Burkholderiales</taxon>
        <taxon>Burkholderiaceae</taxon>
        <taxon>Cupriavidus</taxon>
    </lineage>
</organism>
<keyword id="KW-0066">ATP synthesis</keyword>
<keyword id="KW-0997">Cell inner membrane</keyword>
<keyword id="KW-1003">Cell membrane</keyword>
<keyword id="KW-0139">CF(1)</keyword>
<keyword id="KW-0375">Hydrogen ion transport</keyword>
<keyword id="KW-0406">Ion transport</keyword>
<keyword id="KW-0472">Membrane</keyword>
<keyword id="KW-1185">Reference proteome</keyword>
<keyword id="KW-0813">Transport</keyword>
<gene>
    <name evidence="1" type="primary">atpG</name>
    <name type="ordered locus">H16_A3638</name>
</gene>
<name>ATPG_CUPNH</name>
<accession>Q0K5M6</accession>